<dbReference type="EC" id="1.1.1.85" evidence="1"/>
<dbReference type="EMBL" id="CP000025">
    <property type="protein sequence ID" value="AAW34488.1"/>
    <property type="molecule type" value="Genomic_DNA"/>
</dbReference>
<dbReference type="RefSeq" id="WP_002867509.1">
    <property type="nucleotide sequence ID" value="NC_003912.7"/>
</dbReference>
<dbReference type="SMR" id="Q5HS77"/>
<dbReference type="KEGG" id="cjr:CJE1888"/>
<dbReference type="HOGENOM" id="CLU_031953_0_3_7"/>
<dbReference type="UniPathway" id="UPA00048">
    <property type="reaction ID" value="UER00072"/>
</dbReference>
<dbReference type="GO" id="GO:0005829">
    <property type="term" value="C:cytosol"/>
    <property type="evidence" value="ECO:0007669"/>
    <property type="project" value="TreeGrafter"/>
</dbReference>
<dbReference type="GO" id="GO:0003862">
    <property type="term" value="F:3-isopropylmalate dehydrogenase activity"/>
    <property type="evidence" value="ECO:0007669"/>
    <property type="project" value="UniProtKB-UniRule"/>
</dbReference>
<dbReference type="GO" id="GO:0000287">
    <property type="term" value="F:magnesium ion binding"/>
    <property type="evidence" value="ECO:0007669"/>
    <property type="project" value="InterPro"/>
</dbReference>
<dbReference type="GO" id="GO:0051287">
    <property type="term" value="F:NAD binding"/>
    <property type="evidence" value="ECO:0007669"/>
    <property type="project" value="InterPro"/>
</dbReference>
<dbReference type="GO" id="GO:0009098">
    <property type="term" value="P:L-leucine biosynthetic process"/>
    <property type="evidence" value="ECO:0007669"/>
    <property type="project" value="UniProtKB-UniRule"/>
</dbReference>
<dbReference type="FunFam" id="3.40.718.10:FF:000006">
    <property type="entry name" value="3-isopropylmalate dehydrogenase"/>
    <property type="match status" value="1"/>
</dbReference>
<dbReference type="Gene3D" id="3.40.718.10">
    <property type="entry name" value="Isopropylmalate Dehydrogenase"/>
    <property type="match status" value="1"/>
</dbReference>
<dbReference type="HAMAP" id="MF_01033">
    <property type="entry name" value="LeuB_type1"/>
    <property type="match status" value="1"/>
</dbReference>
<dbReference type="InterPro" id="IPR019818">
    <property type="entry name" value="IsoCit/isopropylmalate_DH_CS"/>
</dbReference>
<dbReference type="InterPro" id="IPR024084">
    <property type="entry name" value="IsoPropMal-DH-like_dom"/>
</dbReference>
<dbReference type="InterPro" id="IPR004429">
    <property type="entry name" value="Isopropylmalate_DH"/>
</dbReference>
<dbReference type="NCBIfam" id="TIGR00169">
    <property type="entry name" value="leuB"/>
    <property type="match status" value="1"/>
</dbReference>
<dbReference type="PANTHER" id="PTHR42979">
    <property type="entry name" value="3-ISOPROPYLMALATE DEHYDROGENASE"/>
    <property type="match status" value="1"/>
</dbReference>
<dbReference type="PANTHER" id="PTHR42979:SF1">
    <property type="entry name" value="3-ISOPROPYLMALATE DEHYDROGENASE"/>
    <property type="match status" value="1"/>
</dbReference>
<dbReference type="Pfam" id="PF00180">
    <property type="entry name" value="Iso_dh"/>
    <property type="match status" value="1"/>
</dbReference>
<dbReference type="SMART" id="SM01329">
    <property type="entry name" value="Iso_dh"/>
    <property type="match status" value="1"/>
</dbReference>
<dbReference type="SUPFAM" id="SSF53659">
    <property type="entry name" value="Isocitrate/Isopropylmalate dehydrogenase-like"/>
    <property type="match status" value="1"/>
</dbReference>
<dbReference type="PROSITE" id="PS00470">
    <property type="entry name" value="IDH_IMDH"/>
    <property type="match status" value="1"/>
</dbReference>
<sequence>MKAYKVAVLAGDGIGPLVMKEALKILTFISQKYNFSFEFNEAKIGGASIDAYGVALSDETLKLCEQSDAILFGSVGGPKWDNLPIDQRPERASLLPLRKHFNLFANLRPCKIYESLTHASPLKNEIIQKGVDILCVRELTGGIYFGKQDLGKESAYDTEIYTKKEIERIAHIAFESARIRKKKVHLIDKANVLASSILWREVVANVVKDYQDINLEYMYVDNAAMQIVKNPSIFDVMLCSNLFGDILSDELAAINGSLGLLSSASLNDKGFGLYEPAGGSAPDIAHLNIANPIAQILSAALMLKYSFKEEQAAQDIENAISLALAQGKMTKDLNAKSYLNTDEMGDCILEILKENNNG</sequence>
<evidence type="ECO:0000255" key="1">
    <source>
        <dbReference type="HAMAP-Rule" id="MF_01033"/>
    </source>
</evidence>
<comment type="function">
    <text evidence="1">Catalyzes the oxidation of 3-carboxy-2-hydroxy-4-methylpentanoate (3-isopropylmalate) to 3-carboxy-4-methyl-2-oxopentanoate. The product decarboxylates to 4-methyl-2 oxopentanoate.</text>
</comment>
<comment type="catalytic activity">
    <reaction evidence="1">
        <text>(2R,3S)-3-isopropylmalate + NAD(+) = 4-methyl-2-oxopentanoate + CO2 + NADH</text>
        <dbReference type="Rhea" id="RHEA:32271"/>
        <dbReference type="ChEBI" id="CHEBI:16526"/>
        <dbReference type="ChEBI" id="CHEBI:17865"/>
        <dbReference type="ChEBI" id="CHEBI:35121"/>
        <dbReference type="ChEBI" id="CHEBI:57540"/>
        <dbReference type="ChEBI" id="CHEBI:57945"/>
        <dbReference type="EC" id="1.1.1.85"/>
    </reaction>
</comment>
<comment type="cofactor">
    <cofactor evidence="1">
        <name>Mg(2+)</name>
        <dbReference type="ChEBI" id="CHEBI:18420"/>
    </cofactor>
    <cofactor evidence="1">
        <name>Mn(2+)</name>
        <dbReference type="ChEBI" id="CHEBI:29035"/>
    </cofactor>
    <text evidence="1">Binds 1 Mg(2+) or Mn(2+) ion per subunit.</text>
</comment>
<comment type="pathway">
    <text evidence="1">Amino-acid biosynthesis; L-leucine biosynthesis; L-leucine from 3-methyl-2-oxobutanoate: step 3/4.</text>
</comment>
<comment type="subunit">
    <text evidence="1">Homodimer.</text>
</comment>
<comment type="subcellular location">
    <subcellularLocation>
        <location evidence="1">Cytoplasm</location>
    </subcellularLocation>
</comment>
<comment type="similarity">
    <text evidence="1">Belongs to the isocitrate and isopropylmalate dehydrogenases family. LeuB type 1 subfamily.</text>
</comment>
<reference key="1">
    <citation type="journal article" date="2005" name="PLoS Biol.">
        <title>Major structural differences and novel potential virulence mechanisms from the genomes of multiple Campylobacter species.</title>
        <authorList>
            <person name="Fouts D.E."/>
            <person name="Mongodin E.F."/>
            <person name="Mandrell R.E."/>
            <person name="Miller W.G."/>
            <person name="Rasko D.A."/>
            <person name="Ravel J."/>
            <person name="Brinkac L.M."/>
            <person name="DeBoy R.T."/>
            <person name="Parker C.T."/>
            <person name="Daugherty S.C."/>
            <person name="Dodson R.J."/>
            <person name="Durkin A.S."/>
            <person name="Madupu R."/>
            <person name="Sullivan S.A."/>
            <person name="Shetty J.U."/>
            <person name="Ayodeji M.A."/>
            <person name="Shvartsbeyn A."/>
            <person name="Schatz M.C."/>
            <person name="Badger J.H."/>
            <person name="Fraser C.M."/>
            <person name="Nelson K.E."/>
        </authorList>
    </citation>
    <scope>NUCLEOTIDE SEQUENCE [LARGE SCALE GENOMIC DNA]</scope>
    <source>
        <strain>RM1221</strain>
    </source>
</reference>
<gene>
    <name evidence="1" type="primary">leuB</name>
    <name type="ordered locus">CJE1888</name>
</gene>
<accession>Q5HS77</accession>
<feature type="chain" id="PRO_0000083676" description="3-isopropylmalate dehydrogenase">
    <location>
        <begin position="1"/>
        <end position="358"/>
    </location>
</feature>
<feature type="binding site" evidence="1">
    <location>
        <begin position="77"/>
        <end position="90"/>
    </location>
    <ligand>
        <name>NAD(+)</name>
        <dbReference type="ChEBI" id="CHEBI:57540"/>
    </ligand>
</feature>
<feature type="binding site" evidence="1">
    <location>
        <position position="98"/>
    </location>
    <ligand>
        <name>substrate</name>
    </ligand>
</feature>
<feature type="binding site" evidence="1">
    <location>
        <position position="108"/>
    </location>
    <ligand>
        <name>substrate</name>
    </ligand>
</feature>
<feature type="binding site" evidence="1">
    <location>
        <position position="137"/>
    </location>
    <ligand>
        <name>substrate</name>
    </ligand>
</feature>
<feature type="binding site" evidence="1">
    <location>
        <position position="221"/>
    </location>
    <ligand>
        <name>Mg(2+)</name>
        <dbReference type="ChEBI" id="CHEBI:18420"/>
    </ligand>
</feature>
<feature type="binding site" evidence="1">
    <location>
        <position position="221"/>
    </location>
    <ligand>
        <name>substrate</name>
    </ligand>
</feature>
<feature type="binding site" evidence="1">
    <location>
        <position position="245"/>
    </location>
    <ligand>
        <name>Mg(2+)</name>
        <dbReference type="ChEBI" id="CHEBI:18420"/>
    </ligand>
</feature>
<feature type="binding site" evidence="1">
    <location>
        <position position="249"/>
    </location>
    <ligand>
        <name>Mg(2+)</name>
        <dbReference type="ChEBI" id="CHEBI:18420"/>
    </ligand>
</feature>
<feature type="binding site" evidence="1">
    <location>
        <begin position="279"/>
        <end position="291"/>
    </location>
    <ligand>
        <name>NAD(+)</name>
        <dbReference type="ChEBI" id="CHEBI:57540"/>
    </ligand>
</feature>
<feature type="site" description="Important for catalysis" evidence="1">
    <location>
        <position position="144"/>
    </location>
</feature>
<feature type="site" description="Important for catalysis" evidence="1">
    <location>
        <position position="189"/>
    </location>
</feature>
<name>LEU3_CAMJR</name>
<keyword id="KW-0028">Amino-acid biosynthesis</keyword>
<keyword id="KW-0100">Branched-chain amino acid biosynthesis</keyword>
<keyword id="KW-0963">Cytoplasm</keyword>
<keyword id="KW-0432">Leucine biosynthesis</keyword>
<keyword id="KW-0460">Magnesium</keyword>
<keyword id="KW-0464">Manganese</keyword>
<keyword id="KW-0479">Metal-binding</keyword>
<keyword id="KW-0520">NAD</keyword>
<keyword id="KW-0560">Oxidoreductase</keyword>
<organism>
    <name type="scientific">Campylobacter jejuni (strain RM1221)</name>
    <dbReference type="NCBI Taxonomy" id="195099"/>
    <lineage>
        <taxon>Bacteria</taxon>
        <taxon>Pseudomonadati</taxon>
        <taxon>Campylobacterota</taxon>
        <taxon>Epsilonproteobacteria</taxon>
        <taxon>Campylobacterales</taxon>
        <taxon>Campylobacteraceae</taxon>
        <taxon>Campylobacter</taxon>
    </lineage>
</organism>
<protein>
    <recommendedName>
        <fullName evidence="1">3-isopropylmalate dehydrogenase</fullName>
        <ecNumber evidence="1">1.1.1.85</ecNumber>
    </recommendedName>
    <alternativeName>
        <fullName evidence="1">3-IPM-DH</fullName>
    </alternativeName>
    <alternativeName>
        <fullName evidence="1">Beta-IPM dehydrogenase</fullName>
        <shortName evidence="1">IMDH</shortName>
    </alternativeName>
</protein>
<proteinExistence type="inferred from homology"/>